<protein>
    <recommendedName>
        <fullName>Protein phosphatase PP2A regulatory subunit B</fullName>
    </recommendedName>
    <alternativeName>
        <fullName>Cell division control protein 55</fullName>
    </alternativeName>
    <alternativeName>
        <fullName>PR55</fullName>
    </alternativeName>
</protein>
<evidence type="ECO:0000250" key="1"/>
<evidence type="ECO:0000256" key="2">
    <source>
        <dbReference type="SAM" id="MobiDB-lite"/>
    </source>
</evidence>
<evidence type="ECO:0000305" key="3"/>
<name>2ABA_CANTR</name>
<accession>P53031</accession>
<keyword id="KW-0131">Cell cycle</keyword>
<keyword id="KW-0677">Repeat</keyword>
<keyword id="KW-0853">WD repeat</keyword>
<organism>
    <name type="scientific">Candida tropicalis</name>
    <name type="common">Yeast</name>
    <dbReference type="NCBI Taxonomy" id="5482"/>
    <lineage>
        <taxon>Eukaryota</taxon>
        <taxon>Fungi</taxon>
        <taxon>Dikarya</taxon>
        <taxon>Ascomycota</taxon>
        <taxon>Saccharomycotina</taxon>
        <taxon>Pichiomycetes</taxon>
        <taxon>Debaryomycetaceae</taxon>
        <taxon>Candida/Lodderomyces clade</taxon>
        <taxon>Candida</taxon>
    </lineage>
</organism>
<sequence length="508" mass="57914">MNLDFSQCFGDKGDIENITEADIISTVEFDHTGDFLATGDKGGRVVLFERNQSKKKQSCEYKFFTEFQSHDAEFDYLKSLEIEEKINKIKWLKSANDSLCLLSTNDKTIKLWKIQERQIKLVSENNLNGLNHLPSSNIGIESLKLPQLQLHDKLISAQPKKIYANAHAYHINSISVNSDQETYLSADDLRINLWNLGIADQSFNIVDIKPANMEELTEVITSAEFHPLQCNLFMYSSSKGTIKLSDMRSNSLCDSHAKIFEEYLDPSSHNFFTEITSSISDVKFSHDGRYIASRDYMTVKIWDLAMENKPIKTIDVHEHLRERLCDTYENDAIFDKFEVQFGGDNKSVMTGSYNNQFVIYPNAVNTGNDDKPKFKSAFKNSSKRSKKNGFSTRTTDDDDDDDDDDDDEEADDEFDEEVPATKNSPGSQLEDDDEQEEIILQADKSAFKSKKSGQHPMRRRMTSGVGSNLGREFDDVDFKKSILHLSWHPRENSVAIAATNNLYIFSTL</sequence>
<comment type="function">
    <text evidence="1">Phosphatase 2A affects a variety of biological processes in the cell such as transcription, cell cycle progression and cellular morphogenesis, and provides an initial identification of critical substrates for this phosphatase. The regulatory subunit may direct the catalytic subunit to distinct, albeit overlapping, subsets of substrates (By similarity).</text>
</comment>
<comment type="subunit">
    <text>PP2A exists in several trimeric forms, all of which consist of a core composed of a catalytic subunit associated with a 65 kDa (PR65) (Subunit A) and a 55 kDa (PR55) (Subunit B) regulatory subunit.</text>
</comment>
<comment type="similarity">
    <text evidence="3">Belongs to the phosphatase 2A regulatory subunit B family.</text>
</comment>
<feature type="chain" id="PRO_0000071440" description="Protein phosphatase PP2A regulatory subunit B">
    <location>
        <begin position="1"/>
        <end position="508"/>
    </location>
</feature>
<feature type="repeat" description="WD 1">
    <location>
        <begin position="19"/>
        <end position="58"/>
    </location>
</feature>
<feature type="repeat" description="WD 2">
    <location>
        <begin position="81"/>
        <end position="122"/>
    </location>
</feature>
<feature type="repeat" description="WD 3">
    <location>
        <begin position="166"/>
        <end position="204"/>
    </location>
</feature>
<feature type="repeat" description="WD 4">
    <location>
        <begin position="215"/>
        <end position="255"/>
    </location>
</feature>
<feature type="repeat" description="WD 5">
    <location>
        <begin position="274"/>
        <end position="312"/>
    </location>
</feature>
<feature type="repeat" description="WD 6">
    <location>
        <begin position="329"/>
        <end position="370"/>
    </location>
</feature>
<feature type="repeat" description="WD 7">
    <location>
        <begin position="477"/>
        <end position="507"/>
    </location>
</feature>
<feature type="region of interest" description="Disordered" evidence="2">
    <location>
        <begin position="369"/>
        <end position="466"/>
    </location>
</feature>
<feature type="compositionally biased region" description="Acidic residues" evidence="2">
    <location>
        <begin position="396"/>
        <end position="418"/>
    </location>
</feature>
<feature type="compositionally biased region" description="Basic residues" evidence="2">
    <location>
        <begin position="447"/>
        <end position="461"/>
    </location>
</feature>
<dbReference type="EMBL" id="X88899">
    <property type="protein sequence ID" value="CAA61361.1"/>
    <property type="molecule type" value="Genomic_DNA"/>
</dbReference>
<dbReference type="PIR" id="S57751">
    <property type="entry name" value="S57751"/>
</dbReference>
<dbReference type="SMR" id="P53031"/>
<dbReference type="EnsemblFungi" id="CTRG_01251-t43_1">
    <property type="protein sequence ID" value="CTRG_01251-t43_1-p1"/>
    <property type="gene ID" value="CTRG_01251"/>
</dbReference>
<dbReference type="VEuPathDB" id="FungiDB:CTMYA2_019400"/>
<dbReference type="VEuPathDB" id="FungiDB:CTRG_01251"/>
<dbReference type="GO" id="GO:0072686">
    <property type="term" value="C:mitotic spindle"/>
    <property type="evidence" value="ECO:0007669"/>
    <property type="project" value="EnsemblFungi"/>
</dbReference>
<dbReference type="GO" id="GO:0044732">
    <property type="term" value="C:mitotic spindle pole body"/>
    <property type="evidence" value="ECO:0007669"/>
    <property type="project" value="EnsemblFungi"/>
</dbReference>
<dbReference type="GO" id="GO:0000159">
    <property type="term" value="C:protein phosphatase type 2A complex"/>
    <property type="evidence" value="ECO:0007669"/>
    <property type="project" value="EnsemblFungi"/>
</dbReference>
<dbReference type="GO" id="GO:0019888">
    <property type="term" value="F:protein phosphatase regulator activity"/>
    <property type="evidence" value="ECO:0007669"/>
    <property type="project" value="InterPro"/>
</dbReference>
<dbReference type="GO" id="GO:0010972">
    <property type="term" value="P:negative regulation of G2/M transition of mitotic cell cycle"/>
    <property type="evidence" value="ECO:0007669"/>
    <property type="project" value="EnsemblFungi"/>
</dbReference>
<dbReference type="GO" id="GO:0010515">
    <property type="term" value="P:negative regulation of induction of conjugation with cellular fusion"/>
    <property type="evidence" value="ECO:0007669"/>
    <property type="project" value="EnsemblFungi"/>
</dbReference>
<dbReference type="GO" id="GO:0031030">
    <property type="term" value="P:negative regulation of septation initiation signaling"/>
    <property type="evidence" value="ECO:0007669"/>
    <property type="project" value="EnsemblFungi"/>
</dbReference>
<dbReference type="Gene3D" id="2.130.10.10">
    <property type="entry name" value="YVTN repeat-like/Quinoprotein amine dehydrogenase"/>
    <property type="match status" value="2"/>
</dbReference>
<dbReference type="InterPro" id="IPR000009">
    <property type="entry name" value="PP2A_PR55"/>
</dbReference>
<dbReference type="InterPro" id="IPR018067">
    <property type="entry name" value="PP2A_PR55_CS"/>
</dbReference>
<dbReference type="InterPro" id="IPR015943">
    <property type="entry name" value="WD40/YVTN_repeat-like_dom_sf"/>
</dbReference>
<dbReference type="InterPro" id="IPR036322">
    <property type="entry name" value="WD40_repeat_dom_sf"/>
</dbReference>
<dbReference type="InterPro" id="IPR001680">
    <property type="entry name" value="WD40_rpt"/>
</dbReference>
<dbReference type="PANTHER" id="PTHR11871">
    <property type="entry name" value="PROTEIN PHOSPHATASE PP2A REGULATORY SUBUNIT B"/>
    <property type="match status" value="1"/>
</dbReference>
<dbReference type="Pfam" id="PF00400">
    <property type="entry name" value="WD40"/>
    <property type="match status" value="1"/>
</dbReference>
<dbReference type="PIRSF" id="PIRSF037309">
    <property type="entry name" value="PP2A_PR55"/>
    <property type="match status" value="1"/>
</dbReference>
<dbReference type="PRINTS" id="PR00600">
    <property type="entry name" value="PP2APR55"/>
</dbReference>
<dbReference type="SMART" id="SM00320">
    <property type="entry name" value="WD40"/>
    <property type="match status" value="6"/>
</dbReference>
<dbReference type="SUPFAM" id="SSF50978">
    <property type="entry name" value="WD40 repeat-like"/>
    <property type="match status" value="1"/>
</dbReference>
<dbReference type="PROSITE" id="PS01024">
    <property type="entry name" value="PR55_1"/>
    <property type="match status" value="1"/>
</dbReference>
<dbReference type="PROSITE" id="PS01025">
    <property type="entry name" value="PR55_2"/>
    <property type="match status" value="1"/>
</dbReference>
<dbReference type="PROSITE" id="PS00678">
    <property type="entry name" value="WD_REPEATS_1"/>
    <property type="match status" value="1"/>
</dbReference>
<reference key="1">
    <citation type="journal article" date="1996" name="Yeast">
        <title>CtCdc55p and CtHa13p: two putative regulatory proteins from Candida tropicalis with long acidic domains.</title>
        <authorList>
            <person name="Rodriguez P.L."/>
            <person name="Ali R."/>
            <person name="Serrano R."/>
        </authorList>
    </citation>
    <scope>NUCLEOTIDE SEQUENCE [GENOMIC DNA]</scope>
    <source>
        <strain>NCYC 2512</strain>
    </source>
</reference>
<proteinExistence type="inferred from homology"/>
<gene>
    <name type="primary">CDC55</name>
</gene>